<accession>B4M5A7</accession>
<name>EI3D2_DROVI</name>
<organism>
    <name type="scientific">Drosophila virilis</name>
    <name type="common">Fruit fly</name>
    <dbReference type="NCBI Taxonomy" id="7244"/>
    <lineage>
        <taxon>Eukaryota</taxon>
        <taxon>Metazoa</taxon>
        <taxon>Ecdysozoa</taxon>
        <taxon>Arthropoda</taxon>
        <taxon>Hexapoda</taxon>
        <taxon>Insecta</taxon>
        <taxon>Pterygota</taxon>
        <taxon>Neoptera</taxon>
        <taxon>Endopterygota</taxon>
        <taxon>Diptera</taxon>
        <taxon>Brachycera</taxon>
        <taxon>Muscomorpha</taxon>
        <taxon>Ephydroidea</taxon>
        <taxon>Drosophilidae</taxon>
        <taxon>Drosophila</taxon>
    </lineage>
</organism>
<feature type="chain" id="PRO_0000364161" description="Eukaryotic translation initiation factor 3 subunit D-2">
    <location>
        <begin position="1"/>
        <end position="554"/>
    </location>
</feature>
<feature type="region of interest" description="Disordered" evidence="3">
    <location>
        <begin position="116"/>
        <end position="149"/>
    </location>
</feature>
<feature type="region of interest" description="RNA gate" evidence="1">
    <location>
        <begin position="291"/>
        <end position="305"/>
    </location>
</feature>
<feature type="region of interest" description="Disordered" evidence="3">
    <location>
        <begin position="532"/>
        <end position="554"/>
    </location>
</feature>
<feature type="compositionally biased region" description="Gly residues" evidence="3">
    <location>
        <begin position="120"/>
        <end position="140"/>
    </location>
</feature>
<sequence length="554" mass="62723">MSQYAPFIKPYIEYNQFGWGPCDMPDMEVPYQPFCKSDRLGKISDWMMPVQEKKYANKYASTFGSNNSQYAYFHEDDDATFHLVDGGNPRALKPYQRNRYRPNQRNNVRVHGRNVRGNAAIGGGQGGAGGTGGAGVGNKYGKGRDMRRGNMGRRFMRNAPVRLRESSVVVRSDWVSIEEIDFPRLLKLSLPNIKDGVDVVTCGTLEYYDKQCDRINVKNERPLQKIDRIINVPGTIDDPIIRRLSKSMGNVFATDDIIATLMCCTRSNYSWDIVIEKLGTKVFLDKRDNAQFDLLTVNETALEPPQDEEGSINSPQSLSLEATLINHNFSQQVLKIGEQEPKHKFDEPNPFEEPGVELASVAYRYKEWQLGDDVVLIARCKHNGVIKSPAGELQFLSIKALNEWDSKAANSVEWRQKLDSQRGAVLASELRNNACKLAKWTVEAVLAGSDQLKLGYVSRVNRKDHLRHVILGMQQFKPQEFATQINLNMDNAWGVLRCLVDIVLKQPDGKYLIMKDPNKPMIRLYDIPDNAFDSDGNDDEETSDDRPFLKSLGN</sequence>
<protein>
    <recommendedName>
        <fullName evidence="2">Eukaryotic translation initiation factor 3 subunit D-2</fullName>
        <shortName evidence="2">eIF3d-2</shortName>
    </recommendedName>
    <alternativeName>
        <fullName evidence="2">Eukaryotic translation initiation factor 3 subunit 7-2</fullName>
    </alternativeName>
</protein>
<comment type="function">
    <text evidence="2">mRNA cap-binding component of the eukaryotic translation initiation factor 3 (eIF-3) complex, which is involved in protein synthesis of a specialized repertoire of mRNAs and, together with other initiation factors, stimulates binding of mRNA and methionyl-tRNAi to the 40S ribosome. The eIF-3 complex specifically targets and initiates translation of a subset of mRNAs involved in cell proliferation. In the eIF-3 complex, eif3d specifically recognizes and binds the 7-methylguanosine cap of a subset of mRNAs.</text>
</comment>
<comment type="subunit">
    <text evidence="2">Component of the eukaryotic translation initiation factor 3 (eIF-3) complex. The eIF-3 complex interacts with pix.</text>
</comment>
<comment type="subcellular location">
    <subcellularLocation>
        <location evidence="2">Cytoplasm</location>
    </subcellularLocation>
</comment>
<comment type="domain">
    <text evidence="2">The RNA gate region regulates mRNA cap recognition to prevent promiscuous mRNA-binding before assembly of eif3d into the full eukaryotic translation initiation factor 3 (eIF-3) complex.</text>
</comment>
<comment type="similarity">
    <text evidence="2">Belongs to the eIF-3 subunit D family.</text>
</comment>
<proteinExistence type="inferred from homology"/>
<keyword id="KW-0963">Cytoplasm</keyword>
<keyword id="KW-0396">Initiation factor</keyword>
<keyword id="KW-0648">Protein biosynthesis</keyword>
<keyword id="KW-1185">Reference proteome</keyword>
<keyword id="KW-0694">RNA-binding</keyword>
<evidence type="ECO:0000250" key="1">
    <source>
        <dbReference type="UniProtKB" id="K7IM66"/>
    </source>
</evidence>
<evidence type="ECO:0000255" key="2">
    <source>
        <dbReference type="HAMAP-Rule" id="MF_03003"/>
    </source>
</evidence>
<evidence type="ECO:0000256" key="3">
    <source>
        <dbReference type="SAM" id="MobiDB-lite"/>
    </source>
</evidence>
<dbReference type="EMBL" id="CH940652">
    <property type="protein sequence ID" value="EDW59818.1"/>
    <property type="molecule type" value="Genomic_DNA"/>
</dbReference>
<dbReference type="RefSeq" id="XP_002056706.1">
    <property type="nucleotide sequence ID" value="XM_002056670.4"/>
</dbReference>
<dbReference type="SMR" id="B4M5A7"/>
<dbReference type="FunCoup" id="B4M5A7">
    <property type="interactions" value="1835"/>
</dbReference>
<dbReference type="STRING" id="7244.B4M5A7"/>
<dbReference type="EnsemblMetazoa" id="FBtr0225991">
    <property type="protein sequence ID" value="FBpp0224483"/>
    <property type="gene ID" value="FBgn0197356"/>
</dbReference>
<dbReference type="EnsemblMetazoa" id="XM_002056670.3">
    <property type="protein sequence ID" value="XP_002056706.1"/>
    <property type="gene ID" value="LOC6632344"/>
</dbReference>
<dbReference type="GeneID" id="6632344"/>
<dbReference type="KEGG" id="dvi:6632344"/>
<dbReference type="CTD" id="41475"/>
<dbReference type="eggNOG" id="KOG2479">
    <property type="taxonomic scope" value="Eukaryota"/>
</dbReference>
<dbReference type="HOGENOM" id="CLU_024521_2_0_1"/>
<dbReference type="InParanoid" id="B4M5A7"/>
<dbReference type="OMA" id="CKHNGVI"/>
<dbReference type="OrthoDB" id="16538at2759"/>
<dbReference type="PhylomeDB" id="B4M5A7"/>
<dbReference type="Proteomes" id="UP000008792">
    <property type="component" value="Unassembled WGS sequence"/>
</dbReference>
<dbReference type="GO" id="GO:0016282">
    <property type="term" value="C:eukaryotic 43S preinitiation complex"/>
    <property type="evidence" value="ECO:0007669"/>
    <property type="project" value="UniProtKB-UniRule"/>
</dbReference>
<dbReference type="GO" id="GO:0033290">
    <property type="term" value="C:eukaryotic 48S preinitiation complex"/>
    <property type="evidence" value="ECO:0007669"/>
    <property type="project" value="UniProtKB-UniRule"/>
</dbReference>
<dbReference type="GO" id="GO:0005852">
    <property type="term" value="C:eukaryotic translation initiation factor 3 complex"/>
    <property type="evidence" value="ECO:0000250"/>
    <property type="project" value="UniProtKB"/>
</dbReference>
<dbReference type="GO" id="GO:0098808">
    <property type="term" value="F:mRNA cap binding"/>
    <property type="evidence" value="ECO:0007669"/>
    <property type="project" value="UniProtKB-UniRule"/>
</dbReference>
<dbReference type="GO" id="GO:0003743">
    <property type="term" value="F:translation initiation factor activity"/>
    <property type="evidence" value="ECO:0000250"/>
    <property type="project" value="UniProtKB"/>
</dbReference>
<dbReference type="GO" id="GO:0002191">
    <property type="term" value="P:cap-dependent translational initiation"/>
    <property type="evidence" value="ECO:0007669"/>
    <property type="project" value="UniProtKB-UniRule"/>
</dbReference>
<dbReference type="GO" id="GO:0001732">
    <property type="term" value="P:formation of cytoplasmic translation initiation complex"/>
    <property type="evidence" value="ECO:0007669"/>
    <property type="project" value="UniProtKB-UniRule"/>
</dbReference>
<dbReference type="GO" id="GO:0006446">
    <property type="term" value="P:regulation of translational initiation"/>
    <property type="evidence" value="ECO:0000250"/>
    <property type="project" value="UniProtKB"/>
</dbReference>
<dbReference type="HAMAP" id="MF_03003">
    <property type="entry name" value="eIF3d"/>
    <property type="match status" value="1"/>
</dbReference>
<dbReference type="InterPro" id="IPR007783">
    <property type="entry name" value="eIF3d"/>
</dbReference>
<dbReference type="PANTHER" id="PTHR12399">
    <property type="entry name" value="EUKARYOTIC TRANSLATION INITIATION FACTOR 3 SUBUNIT 7"/>
    <property type="match status" value="1"/>
</dbReference>
<dbReference type="PANTHER" id="PTHR12399:SF0">
    <property type="entry name" value="EUKARYOTIC TRANSLATION INITIATION FACTOR 3 SUBUNIT D"/>
    <property type="match status" value="1"/>
</dbReference>
<dbReference type="Pfam" id="PF05091">
    <property type="entry name" value="eIF-3_zeta"/>
    <property type="match status" value="1"/>
</dbReference>
<dbReference type="PIRSF" id="PIRSF016281">
    <property type="entry name" value="EIF-3_zeta"/>
    <property type="match status" value="1"/>
</dbReference>
<gene>
    <name evidence="2" type="primary">eIF3d2</name>
    <name evidence="2" type="synonym">eIF3-S7-2</name>
    <name type="ORF">GJ10066</name>
</gene>
<reference key="1">
    <citation type="journal article" date="2007" name="Nature">
        <title>Evolution of genes and genomes on the Drosophila phylogeny.</title>
        <authorList>
            <consortium name="Drosophila 12 genomes consortium"/>
        </authorList>
    </citation>
    <scope>NUCLEOTIDE SEQUENCE [LARGE SCALE GENOMIC DNA]</scope>
    <source>
        <strain>Tucson 15010-1051.87</strain>
    </source>
</reference>